<keyword id="KW-0418">Kinase</keyword>
<keyword id="KW-0547">Nucleotide-binding</keyword>
<keyword id="KW-1185">Reference proteome</keyword>
<keyword id="KW-0723">Serine/threonine-protein kinase</keyword>
<keyword id="KW-0808">Transferase</keyword>
<proteinExistence type="inferred from homology"/>
<reference key="1">
    <citation type="submission" date="2003-10" db="EMBL/GenBank/DDBJ databases">
        <title>The complete genome sequence of the alkaliphilic Bacillus clausii KSM-K16.</title>
        <authorList>
            <person name="Takaki Y."/>
            <person name="Kageyama Y."/>
            <person name="Shimamura S."/>
            <person name="Suzuki H."/>
            <person name="Nishi S."/>
            <person name="Hatada Y."/>
            <person name="Kawai S."/>
            <person name="Ito S."/>
            <person name="Horikoshi K."/>
        </authorList>
    </citation>
    <scope>NUCLEOTIDE SEQUENCE [LARGE SCALE GENOMIC DNA]</scope>
    <source>
        <strain>KSM-K16</strain>
    </source>
</reference>
<dbReference type="EC" id="2.7.11.32" evidence="1"/>
<dbReference type="EC" id="2.7.4.27" evidence="1"/>
<dbReference type="EMBL" id="AP006627">
    <property type="protein sequence ID" value="BAD64222.1"/>
    <property type="molecule type" value="Genomic_DNA"/>
</dbReference>
<dbReference type="RefSeq" id="WP_011246531.1">
    <property type="nucleotide sequence ID" value="NC_006582.1"/>
</dbReference>
<dbReference type="SMR" id="Q5WHD3"/>
<dbReference type="STRING" id="66692.ABC1687"/>
<dbReference type="KEGG" id="bcl:ABC1687"/>
<dbReference type="eggNOG" id="COG1806">
    <property type="taxonomic scope" value="Bacteria"/>
</dbReference>
<dbReference type="HOGENOM" id="CLU_046206_2_1_9"/>
<dbReference type="OrthoDB" id="9782201at2"/>
<dbReference type="Proteomes" id="UP000001168">
    <property type="component" value="Chromosome"/>
</dbReference>
<dbReference type="GO" id="GO:0043531">
    <property type="term" value="F:ADP binding"/>
    <property type="evidence" value="ECO:0007669"/>
    <property type="project" value="UniProtKB-UniRule"/>
</dbReference>
<dbReference type="GO" id="GO:0005524">
    <property type="term" value="F:ATP binding"/>
    <property type="evidence" value="ECO:0007669"/>
    <property type="project" value="InterPro"/>
</dbReference>
<dbReference type="GO" id="GO:0016776">
    <property type="term" value="F:phosphotransferase activity, phosphate group as acceptor"/>
    <property type="evidence" value="ECO:0007669"/>
    <property type="project" value="UniProtKB-UniRule"/>
</dbReference>
<dbReference type="GO" id="GO:0004674">
    <property type="term" value="F:protein serine/threonine kinase activity"/>
    <property type="evidence" value="ECO:0007669"/>
    <property type="project" value="UniProtKB-UniRule"/>
</dbReference>
<dbReference type="HAMAP" id="MF_00921">
    <property type="entry name" value="PDRP"/>
    <property type="match status" value="1"/>
</dbReference>
<dbReference type="InterPro" id="IPR005177">
    <property type="entry name" value="Kinase-pyrophosphorylase"/>
</dbReference>
<dbReference type="InterPro" id="IPR026565">
    <property type="entry name" value="PPDK_reg"/>
</dbReference>
<dbReference type="NCBIfam" id="NF003742">
    <property type="entry name" value="PRK05339.1"/>
    <property type="match status" value="1"/>
</dbReference>
<dbReference type="PANTHER" id="PTHR31756">
    <property type="entry name" value="PYRUVATE, PHOSPHATE DIKINASE REGULATORY PROTEIN 1, CHLOROPLASTIC"/>
    <property type="match status" value="1"/>
</dbReference>
<dbReference type="PANTHER" id="PTHR31756:SF3">
    <property type="entry name" value="PYRUVATE, PHOSPHATE DIKINASE REGULATORY PROTEIN 1, CHLOROPLASTIC"/>
    <property type="match status" value="1"/>
</dbReference>
<dbReference type="Pfam" id="PF03618">
    <property type="entry name" value="Kinase-PPPase"/>
    <property type="match status" value="1"/>
</dbReference>
<comment type="function">
    <text evidence="1">Bifunctional serine/threonine kinase and phosphorylase involved in the regulation of the pyruvate, phosphate dikinase (PPDK) by catalyzing its phosphorylation/dephosphorylation.</text>
</comment>
<comment type="catalytic activity">
    <reaction evidence="1">
        <text>N(tele)-phospho-L-histidyl/L-threonyl-[pyruvate, phosphate dikinase] + ADP = N(tele)-phospho-L-histidyl/O-phospho-L-threonyl-[pyruvate, phosphate dikinase] + AMP + H(+)</text>
        <dbReference type="Rhea" id="RHEA:43692"/>
        <dbReference type="Rhea" id="RHEA-COMP:10650"/>
        <dbReference type="Rhea" id="RHEA-COMP:10651"/>
        <dbReference type="ChEBI" id="CHEBI:15378"/>
        <dbReference type="ChEBI" id="CHEBI:30013"/>
        <dbReference type="ChEBI" id="CHEBI:61977"/>
        <dbReference type="ChEBI" id="CHEBI:83586"/>
        <dbReference type="ChEBI" id="CHEBI:456215"/>
        <dbReference type="ChEBI" id="CHEBI:456216"/>
        <dbReference type="EC" id="2.7.11.32"/>
    </reaction>
</comment>
<comment type="catalytic activity">
    <reaction evidence="1">
        <text>N(tele)-phospho-L-histidyl/O-phospho-L-threonyl-[pyruvate, phosphate dikinase] + phosphate + H(+) = N(tele)-phospho-L-histidyl/L-threonyl-[pyruvate, phosphate dikinase] + diphosphate</text>
        <dbReference type="Rhea" id="RHEA:43696"/>
        <dbReference type="Rhea" id="RHEA-COMP:10650"/>
        <dbReference type="Rhea" id="RHEA-COMP:10651"/>
        <dbReference type="ChEBI" id="CHEBI:15378"/>
        <dbReference type="ChEBI" id="CHEBI:30013"/>
        <dbReference type="ChEBI" id="CHEBI:33019"/>
        <dbReference type="ChEBI" id="CHEBI:43474"/>
        <dbReference type="ChEBI" id="CHEBI:61977"/>
        <dbReference type="ChEBI" id="CHEBI:83586"/>
        <dbReference type="EC" id="2.7.4.27"/>
    </reaction>
</comment>
<comment type="similarity">
    <text evidence="1">Belongs to the pyruvate, phosphate/water dikinase regulatory protein family. PDRP subfamily.</text>
</comment>
<feature type="chain" id="PRO_0000196627" description="Putative pyruvate, phosphate dikinase regulatory protein">
    <location>
        <begin position="1"/>
        <end position="271"/>
    </location>
</feature>
<feature type="binding site" evidence="1">
    <location>
        <begin position="153"/>
        <end position="160"/>
    </location>
    <ligand>
        <name>ADP</name>
        <dbReference type="ChEBI" id="CHEBI:456216"/>
    </ligand>
</feature>
<gene>
    <name type="ordered locus">ABC1687</name>
</gene>
<protein>
    <recommendedName>
        <fullName evidence="1">Putative pyruvate, phosphate dikinase regulatory protein</fullName>
        <shortName evidence="1">PPDK regulatory protein</shortName>
        <ecNumber evidence="1">2.7.11.32</ecNumber>
        <ecNumber evidence="1">2.7.4.27</ecNumber>
    </recommendedName>
</protein>
<evidence type="ECO:0000255" key="1">
    <source>
        <dbReference type="HAMAP-Rule" id="MF_00921"/>
    </source>
</evidence>
<name>PDRP_SHOC1</name>
<organism>
    <name type="scientific">Shouchella clausii (strain KSM-K16)</name>
    <name type="common">Alkalihalobacillus clausii</name>
    <dbReference type="NCBI Taxonomy" id="66692"/>
    <lineage>
        <taxon>Bacteria</taxon>
        <taxon>Bacillati</taxon>
        <taxon>Bacillota</taxon>
        <taxon>Bacilli</taxon>
        <taxon>Bacillales</taxon>
        <taxon>Bacillaceae</taxon>
        <taxon>Shouchella</taxon>
    </lineage>
</organism>
<accession>Q5WHD3</accession>
<sequence>MTNDTERLVVYIVSDSVGETAELVVKAAVSQFSGSNVELRRIPYVEDKGTIQEVVQIARKAKALIAFTLVVPEIRDFLLESAKAANVETVDIIGPVLSKITDLTNAKPRYEPGLIYRLDEDYFRKVEAIEFAVKYDDGRDPRGIILADIVLIGVSRTSKTPLSQYLAHKRLKVANVPLVPEVEPPEELFKISSKKCIGLKISPEKLNSIRTERLKALGLKSEANYANIDRIKEELEYAKKVMDRVNCPVIDVSNKAVEETANLISSMFQRN</sequence>